<dbReference type="EMBL" id="AM086994">
    <property type="protein sequence ID" value="CAJ31263.1"/>
    <property type="molecule type" value="mRNA"/>
</dbReference>
<dbReference type="EMBL" id="BC102770">
    <property type="protein sequence ID" value="AAI02771.1"/>
    <property type="molecule type" value="mRNA"/>
</dbReference>
<dbReference type="RefSeq" id="NP_001029751.2">
    <property type="nucleotide sequence ID" value="NM_001034579.2"/>
</dbReference>
<dbReference type="RefSeq" id="XP_024852468.1">
    <property type="nucleotide sequence ID" value="XM_024996700.2"/>
</dbReference>
<dbReference type="SMR" id="Q3MQ24"/>
<dbReference type="FunCoup" id="Q3MQ24">
    <property type="interactions" value="3111"/>
</dbReference>
<dbReference type="STRING" id="9913.ENSBTAP00000007100"/>
<dbReference type="PaxDb" id="9913-ENSBTAP00000007100"/>
<dbReference type="Ensembl" id="ENSBTAT00000007100.5">
    <property type="protein sequence ID" value="ENSBTAP00000007100.5"/>
    <property type="gene ID" value="ENSBTAG00000005400.6"/>
</dbReference>
<dbReference type="GeneID" id="532686"/>
<dbReference type="KEGG" id="bta:532686"/>
<dbReference type="CTD" id="9474"/>
<dbReference type="VEuPathDB" id="HostDB:ENSBTAG00000005400"/>
<dbReference type="VGNC" id="VGNC:56361">
    <property type="gene designation" value="ATG5"/>
</dbReference>
<dbReference type="eggNOG" id="KOG2976">
    <property type="taxonomic scope" value="Eukaryota"/>
</dbReference>
<dbReference type="GeneTree" id="ENSGT00390000004766"/>
<dbReference type="HOGENOM" id="CLU_051894_3_0_1"/>
<dbReference type="InParanoid" id="Q3MQ24"/>
<dbReference type="OMA" id="SIQKAVW"/>
<dbReference type="OrthoDB" id="272162at2759"/>
<dbReference type="Reactome" id="R-BTA-1632852">
    <property type="pathway name" value="Macroautophagy"/>
</dbReference>
<dbReference type="Reactome" id="R-BTA-5205685">
    <property type="pathway name" value="PINK1-PRKN Mediated Mitophagy"/>
</dbReference>
<dbReference type="Reactome" id="R-BTA-8934903">
    <property type="pathway name" value="Receptor Mediated Mitophagy"/>
</dbReference>
<dbReference type="Proteomes" id="UP000009136">
    <property type="component" value="Chromosome 9"/>
</dbReference>
<dbReference type="Bgee" id="ENSBTAG00000005400">
    <property type="expression patterns" value="Expressed in oocyte and 109 other cell types or tissues"/>
</dbReference>
<dbReference type="GO" id="GO:0034274">
    <property type="term" value="C:Atg12-Atg5-Atg16 complex"/>
    <property type="evidence" value="ECO:0000318"/>
    <property type="project" value="GO_Central"/>
</dbReference>
<dbReference type="GO" id="GO:0005776">
    <property type="term" value="C:autophagosome"/>
    <property type="evidence" value="ECO:0000318"/>
    <property type="project" value="GO_Central"/>
</dbReference>
<dbReference type="GO" id="GO:0005930">
    <property type="term" value="C:axoneme"/>
    <property type="evidence" value="ECO:0000250"/>
    <property type="project" value="UniProtKB"/>
</dbReference>
<dbReference type="GO" id="GO:0061908">
    <property type="term" value="C:phagophore"/>
    <property type="evidence" value="ECO:0000318"/>
    <property type="project" value="GO_Central"/>
</dbReference>
<dbReference type="GO" id="GO:0034045">
    <property type="term" value="C:phagophore assembly site membrane"/>
    <property type="evidence" value="ECO:0000250"/>
    <property type="project" value="UniProtKB"/>
</dbReference>
<dbReference type="GO" id="GO:0035973">
    <property type="term" value="P:aggrephagy"/>
    <property type="evidence" value="ECO:0000318"/>
    <property type="project" value="GO_Central"/>
</dbReference>
<dbReference type="GO" id="GO:0006915">
    <property type="term" value="P:apoptotic process"/>
    <property type="evidence" value="ECO:0007669"/>
    <property type="project" value="UniProtKB-KW"/>
</dbReference>
<dbReference type="GO" id="GO:0000045">
    <property type="term" value="P:autophagosome assembly"/>
    <property type="evidence" value="ECO:0000318"/>
    <property type="project" value="GO_Central"/>
</dbReference>
<dbReference type="GO" id="GO:0006914">
    <property type="term" value="P:autophagy"/>
    <property type="evidence" value="ECO:0000250"/>
    <property type="project" value="UniProtKB"/>
</dbReference>
<dbReference type="GO" id="GO:0006995">
    <property type="term" value="P:cellular response to nitrogen starvation"/>
    <property type="evidence" value="ECO:0000318"/>
    <property type="project" value="GO_Central"/>
</dbReference>
<dbReference type="GO" id="GO:0002376">
    <property type="term" value="P:immune system process"/>
    <property type="evidence" value="ECO:0007669"/>
    <property type="project" value="UniProtKB-KW"/>
</dbReference>
<dbReference type="GO" id="GO:0000423">
    <property type="term" value="P:mitophagy"/>
    <property type="evidence" value="ECO:0000318"/>
    <property type="project" value="GO_Central"/>
</dbReference>
<dbReference type="GO" id="GO:0034727">
    <property type="term" value="P:piecemeal microautophagy of the nucleus"/>
    <property type="evidence" value="ECO:0000318"/>
    <property type="project" value="GO_Central"/>
</dbReference>
<dbReference type="GO" id="GO:1902017">
    <property type="term" value="P:regulation of cilium assembly"/>
    <property type="evidence" value="ECO:0000250"/>
    <property type="project" value="UniProtKB"/>
</dbReference>
<dbReference type="FunFam" id="1.10.246.190:FF:000001">
    <property type="entry name" value="Autophagy related 5"/>
    <property type="match status" value="1"/>
</dbReference>
<dbReference type="FunFam" id="3.10.20.620:FF:000001">
    <property type="entry name" value="Autophagy related 5"/>
    <property type="match status" value="1"/>
</dbReference>
<dbReference type="FunFam" id="3.10.20.90:FF:000100">
    <property type="entry name" value="Autophagy related 5"/>
    <property type="match status" value="1"/>
</dbReference>
<dbReference type="Gene3D" id="3.10.20.620">
    <property type="match status" value="1"/>
</dbReference>
<dbReference type="Gene3D" id="1.10.246.190">
    <property type="entry name" value="Autophagy protein Apg5, helix rich domain"/>
    <property type="match status" value="1"/>
</dbReference>
<dbReference type="Gene3D" id="3.10.20.90">
    <property type="entry name" value="Phosphatidylinositol 3-kinase Catalytic Subunit, Chain A, domain 1"/>
    <property type="match status" value="1"/>
</dbReference>
<dbReference type="InterPro" id="IPR007239">
    <property type="entry name" value="Atg5"/>
</dbReference>
<dbReference type="InterPro" id="IPR048940">
    <property type="entry name" value="ATG5_HBR"/>
</dbReference>
<dbReference type="InterPro" id="IPR042526">
    <property type="entry name" value="Atg5_HR"/>
</dbReference>
<dbReference type="InterPro" id="IPR048939">
    <property type="entry name" value="ATG5_UblA"/>
</dbReference>
<dbReference type="InterPro" id="IPR042527">
    <property type="entry name" value="Atg5_UblA_dom_sf"/>
</dbReference>
<dbReference type="InterPro" id="IPR048318">
    <property type="entry name" value="ATG5_UblB"/>
</dbReference>
<dbReference type="PANTHER" id="PTHR13040">
    <property type="entry name" value="AUTOPHAGY PROTEIN 5"/>
    <property type="match status" value="1"/>
</dbReference>
<dbReference type="PANTHER" id="PTHR13040:SF2">
    <property type="entry name" value="AUTOPHAGY PROTEIN 5"/>
    <property type="match status" value="1"/>
</dbReference>
<dbReference type="Pfam" id="PF20637">
    <property type="entry name" value="ATG5_HBR"/>
    <property type="match status" value="1"/>
</dbReference>
<dbReference type="Pfam" id="PF20638">
    <property type="entry name" value="ATG5_UblA"/>
    <property type="match status" value="1"/>
</dbReference>
<dbReference type="Pfam" id="PF04106">
    <property type="entry name" value="ATG5_UblB"/>
    <property type="match status" value="1"/>
</dbReference>
<keyword id="KW-0007">Acetylation</keyword>
<keyword id="KW-0053">Apoptosis</keyword>
<keyword id="KW-0072">Autophagy</keyword>
<keyword id="KW-0963">Cytoplasm</keyword>
<keyword id="KW-0391">Immunity</keyword>
<keyword id="KW-1017">Isopeptide bond</keyword>
<keyword id="KW-0472">Membrane</keyword>
<keyword id="KW-1185">Reference proteome</keyword>
<keyword id="KW-0832">Ubl conjugation</keyword>
<organism>
    <name type="scientific">Bos taurus</name>
    <name type="common">Bovine</name>
    <dbReference type="NCBI Taxonomy" id="9913"/>
    <lineage>
        <taxon>Eukaryota</taxon>
        <taxon>Metazoa</taxon>
        <taxon>Chordata</taxon>
        <taxon>Craniata</taxon>
        <taxon>Vertebrata</taxon>
        <taxon>Euteleostomi</taxon>
        <taxon>Mammalia</taxon>
        <taxon>Eutheria</taxon>
        <taxon>Laurasiatheria</taxon>
        <taxon>Artiodactyla</taxon>
        <taxon>Ruminantia</taxon>
        <taxon>Pecora</taxon>
        <taxon>Bovidae</taxon>
        <taxon>Bovinae</taxon>
        <taxon>Bos</taxon>
    </lineage>
</organism>
<comment type="function">
    <text evidence="2 3">Involved in autophagic vesicle formation. Conjugation with ATG12, through a ubiquitin-like conjugating system involving ATG7 as an E1-like activating enzyme and ATG10 as an E2-like conjugating enzyme, is essential for its function. The ATG12-ATG5 conjugate acts as an E3-like enzyme which is required for lipidation of ATG8 family proteins and their association to the vesicle membranes. Involved in mitochondrial quality control after oxidative damage, and in subsequent cellular longevity. Plays a critical role in multiple aspects of lymphocyte development and is essential for both B and T lymphocyte survival and proliferation. Required for optimal processing and presentation of antigens for MHC II. Involved in the maintenance of axon morphology and membrane structures, as well as in normal adipocyte differentiation. Promotes primary ciliogenesis through removal of OFD1 from centriolar satellites and degradation of IFT20 via the autophagic pathway. As part of the ATG8 conjugation system with ATG12 and ATG16L1, required for recruitment of LRRK2 to stressed lysosomes and induction of LRRK2 kinase activity in response to lysosomal stress (By similarity).</text>
</comment>
<comment type="function">
    <text evidence="3">May play an important role in the apoptotic process, possibly within the modified cytoskeleton. Its expression is a relatively late event in the apoptotic process, occurring downstream of caspase activity. Plays a crucial role in IFN-gamma-induced autophagic cell death by interacting with FADD.</text>
</comment>
<comment type="subunit">
    <text evidence="2 3">Forms a conjugate with ATG12. Part of the minor complex composed of 4 sets of ATG12-ATG5 and ATG16L1 (400 kDa); this complex interacts with ATG3 leading to disruption of ATG7 interaction and promotion of ATG8-like proteins lipidation (By similarity). Forms an 800-kDa complex composed of ATG12-ATG5 and ATG16L2 (By similarity). The ATG12-ATG5 conjugate interacts with RAB33A; this interaction is bridged by ATG16L1 and promotes ATG12-ATG5-ATG16L1 complex recruitment to phagophores (By similarity). Interacts with TECPR1; the interaction is direct and does not take place when ATG16L1 is associated with the ATG5-ATG12 conjugate. Interacts with DHX58/RIG-1, IFIH1/MDA5 and MAVS/IPS-1 in monomeric form as well as in ATG12-ATG5 conjugate form. The interaction with MAVS is further enhanced upon vesicular stomatitis virus (VSV) infection. Interacts with ATG3 (By similarity). Interacts with ATG7 and ATG10 (By similarity). Interacts with FADD (By similarity). Interacts with Bassoon/BSN; this interaction is important for the regulation of presynaptic autophagy (By similarity). Interacts with ATG16L2 (By similarity).</text>
</comment>
<comment type="subcellular location">
    <subcellularLocation>
        <location evidence="3">Cytoplasm</location>
    </subcellularLocation>
    <subcellularLocation>
        <location evidence="1">Preautophagosomal structure membrane</location>
        <topology evidence="1">Peripheral membrane protein</topology>
    </subcellularLocation>
    <text evidence="1 3">The conjugate detaches from the membrane immediately before or after autophagosome formation is completed. Also localizes to discrete punctae along the ciliary axoneme and to the base of the ciliary axoneme. Under starved conditions, the ATG12-ATG5-ATG16L1 complex is translocated to phagophores driven by RAB33B (By similarity).</text>
</comment>
<comment type="PTM">
    <text evidence="1">Conjugated to ATG12; which is essential for autophagy, but is not required for association with isolation membrane.</text>
</comment>
<comment type="PTM">
    <text evidence="1">Acetylated by EP300.</text>
</comment>
<comment type="similarity">
    <text evidence="4">Belongs to the ATG5 family.</text>
</comment>
<accession>Q3MQ24</accession>
<accession>Q3SZN7</accession>
<reference key="1">
    <citation type="submission" date="2005-09" db="EMBL/GenBank/DDBJ databases">
        <title>Phylogeny and biochemistry of the autophagy protein beclin 1.</title>
        <authorList>
            <person name="Botti J."/>
            <person name="Djavaheri-Mergny M."/>
            <person name="Codogno P."/>
            <person name="Oriol R."/>
        </authorList>
    </citation>
    <scope>NUCLEOTIDE SEQUENCE [MRNA]</scope>
</reference>
<reference key="2">
    <citation type="submission" date="2005-08" db="EMBL/GenBank/DDBJ databases">
        <authorList>
            <consortium name="NIH - Mammalian Gene Collection (MGC) project"/>
        </authorList>
    </citation>
    <scope>NUCLEOTIDE SEQUENCE [LARGE SCALE MRNA]</scope>
    <source>
        <strain>Crossbred X Angus</strain>
        <tissue>Ileum</tissue>
    </source>
</reference>
<sequence length="275" mass="32431">MTDDKDVLRDVWFGRIPTCFTLYQDEITEREAEPYYLLLPRVSYLTLVTDKVKKHFQKVMRQEDISEIWFEYEGTPLKWHYPIGLLFDLLASSSALPWNITVHFKSFPEKDLLHCPSKDVIEAHFMSCVKEADALKHKSQVINEMQKKDHKQLWMGLQNDRFDQFWAINRKLMEYPAEENGFRYIPFRIYQTTTERPFIQKLFRPVSTDGQLHTLGDLLKEVCPSAVAPEDGEKKNQVMIHGIEPMLETPLQWLSEHLSYPDNFLHISIIPQPTD</sequence>
<evidence type="ECO:0000250" key="1"/>
<evidence type="ECO:0000250" key="2">
    <source>
        <dbReference type="UniProtKB" id="Q99J83"/>
    </source>
</evidence>
<evidence type="ECO:0000250" key="3">
    <source>
        <dbReference type="UniProtKB" id="Q9H1Y0"/>
    </source>
</evidence>
<evidence type="ECO:0000305" key="4"/>
<protein>
    <recommendedName>
        <fullName evidence="3">Autophagy protein 5</fullName>
    </recommendedName>
</protein>
<name>ATG5_BOVIN</name>
<feature type="chain" id="PRO_0000218993" description="Autophagy protein 5">
    <location>
        <begin position="1"/>
        <end position="275"/>
    </location>
</feature>
<feature type="modified residue" description="N-acetylmethionine" evidence="3">
    <location>
        <position position="1"/>
    </location>
</feature>
<feature type="cross-link" description="Glycyl lysine isopeptide (Lys-Gly) (interchain with G-Cter in ATG12)" evidence="1">
    <location>
        <position position="130"/>
    </location>
</feature>
<feature type="sequence conflict" description="In Ref. 1; CAJ31263." evidence="4" ref="1">
    <original>K</original>
    <variation>N</variation>
    <location>
        <position position="235"/>
    </location>
</feature>
<gene>
    <name evidence="3" type="primary">ATG5</name>
</gene>
<proteinExistence type="evidence at transcript level"/>